<dbReference type="EC" id="4.1.1.39" evidence="1"/>
<dbReference type="EMBL" id="L01894">
    <property type="protein sequence ID" value="AAA84140.2"/>
    <property type="molecule type" value="Genomic_DNA"/>
</dbReference>
<dbReference type="PIR" id="T01638">
    <property type="entry name" value="T01638"/>
</dbReference>
<dbReference type="GO" id="GO:0009507">
    <property type="term" value="C:chloroplast"/>
    <property type="evidence" value="ECO:0007669"/>
    <property type="project" value="UniProtKB-SubCell"/>
</dbReference>
<dbReference type="GO" id="GO:0000287">
    <property type="term" value="F:magnesium ion binding"/>
    <property type="evidence" value="ECO:0007669"/>
    <property type="project" value="InterPro"/>
</dbReference>
<dbReference type="GO" id="GO:0004497">
    <property type="term" value="F:monooxygenase activity"/>
    <property type="evidence" value="ECO:0007669"/>
    <property type="project" value="UniProtKB-KW"/>
</dbReference>
<dbReference type="GO" id="GO:0016984">
    <property type="term" value="F:ribulose-bisphosphate carboxylase activity"/>
    <property type="evidence" value="ECO:0007669"/>
    <property type="project" value="UniProtKB-EC"/>
</dbReference>
<dbReference type="GO" id="GO:0009853">
    <property type="term" value="P:photorespiration"/>
    <property type="evidence" value="ECO:0007669"/>
    <property type="project" value="UniProtKB-KW"/>
</dbReference>
<dbReference type="GO" id="GO:0019253">
    <property type="term" value="P:reductive pentose-phosphate cycle"/>
    <property type="evidence" value="ECO:0007669"/>
    <property type="project" value="UniProtKB-KW"/>
</dbReference>
<dbReference type="CDD" id="cd08212">
    <property type="entry name" value="RuBisCO_large_I"/>
    <property type="match status" value="1"/>
</dbReference>
<dbReference type="FunFam" id="3.20.20.110:FF:000001">
    <property type="entry name" value="Ribulose bisphosphate carboxylase large chain"/>
    <property type="match status" value="1"/>
</dbReference>
<dbReference type="FunFam" id="3.30.70.150:FF:000001">
    <property type="entry name" value="Ribulose bisphosphate carboxylase large chain"/>
    <property type="match status" value="1"/>
</dbReference>
<dbReference type="Gene3D" id="3.20.20.110">
    <property type="entry name" value="Ribulose bisphosphate carboxylase, large subunit, C-terminal domain"/>
    <property type="match status" value="1"/>
</dbReference>
<dbReference type="Gene3D" id="3.30.70.150">
    <property type="entry name" value="RuBisCO large subunit, N-terminal domain"/>
    <property type="match status" value="1"/>
</dbReference>
<dbReference type="HAMAP" id="MF_01338">
    <property type="entry name" value="RuBisCO_L_type1"/>
    <property type="match status" value="1"/>
</dbReference>
<dbReference type="InterPro" id="IPR033966">
    <property type="entry name" value="RuBisCO"/>
</dbReference>
<dbReference type="InterPro" id="IPR020878">
    <property type="entry name" value="RuBisCo_large_chain_AS"/>
</dbReference>
<dbReference type="InterPro" id="IPR000685">
    <property type="entry name" value="RuBisCO_lsu_C"/>
</dbReference>
<dbReference type="InterPro" id="IPR036376">
    <property type="entry name" value="RuBisCO_lsu_C_sf"/>
</dbReference>
<dbReference type="InterPro" id="IPR017443">
    <property type="entry name" value="RuBisCO_lsu_fd_N"/>
</dbReference>
<dbReference type="InterPro" id="IPR036422">
    <property type="entry name" value="RuBisCO_lsu_N_sf"/>
</dbReference>
<dbReference type="InterPro" id="IPR020888">
    <property type="entry name" value="RuBisCO_lsuI"/>
</dbReference>
<dbReference type="NCBIfam" id="NF003252">
    <property type="entry name" value="PRK04208.1"/>
    <property type="match status" value="1"/>
</dbReference>
<dbReference type="PANTHER" id="PTHR42704">
    <property type="entry name" value="RIBULOSE BISPHOSPHATE CARBOXYLASE"/>
    <property type="match status" value="1"/>
</dbReference>
<dbReference type="PANTHER" id="PTHR42704:SF15">
    <property type="entry name" value="RIBULOSE BISPHOSPHATE CARBOXYLASE LARGE CHAIN"/>
    <property type="match status" value="1"/>
</dbReference>
<dbReference type="Pfam" id="PF00016">
    <property type="entry name" value="RuBisCO_large"/>
    <property type="match status" value="1"/>
</dbReference>
<dbReference type="Pfam" id="PF02788">
    <property type="entry name" value="RuBisCO_large_N"/>
    <property type="match status" value="1"/>
</dbReference>
<dbReference type="SFLD" id="SFLDG01052">
    <property type="entry name" value="RuBisCO"/>
    <property type="match status" value="1"/>
</dbReference>
<dbReference type="SFLD" id="SFLDS00014">
    <property type="entry name" value="RuBisCO"/>
    <property type="match status" value="1"/>
</dbReference>
<dbReference type="SFLD" id="SFLDG00301">
    <property type="entry name" value="RuBisCO-like_proteins"/>
    <property type="match status" value="1"/>
</dbReference>
<dbReference type="SUPFAM" id="SSF51649">
    <property type="entry name" value="RuBisCo, C-terminal domain"/>
    <property type="match status" value="1"/>
</dbReference>
<dbReference type="SUPFAM" id="SSF54966">
    <property type="entry name" value="RuBisCO, large subunit, small (N-terminal) domain"/>
    <property type="match status" value="1"/>
</dbReference>
<dbReference type="PROSITE" id="PS00157">
    <property type="entry name" value="RUBISCO_LARGE"/>
    <property type="match status" value="1"/>
</dbReference>
<name>RBL_CEPFO</name>
<protein>
    <recommendedName>
        <fullName evidence="1">Ribulose bisphosphate carboxylase large chain</fullName>
        <shortName evidence="1">RuBisCO large subunit</shortName>
        <ecNumber evidence="1">4.1.1.39</ecNumber>
    </recommendedName>
</protein>
<proteinExistence type="inferred from homology"/>
<evidence type="ECO:0000255" key="1">
    <source>
        <dbReference type="HAMAP-Rule" id="MF_01338"/>
    </source>
</evidence>
<organism>
    <name type="scientific">Cephalotus follicularis</name>
    <name type="common">Albany pitcher plant</name>
    <dbReference type="NCBI Taxonomy" id="3775"/>
    <lineage>
        <taxon>Eukaryota</taxon>
        <taxon>Viridiplantae</taxon>
        <taxon>Streptophyta</taxon>
        <taxon>Embryophyta</taxon>
        <taxon>Tracheophyta</taxon>
        <taxon>Spermatophyta</taxon>
        <taxon>Magnoliopsida</taxon>
        <taxon>eudicotyledons</taxon>
        <taxon>Gunneridae</taxon>
        <taxon>Pentapetalae</taxon>
        <taxon>rosids</taxon>
        <taxon>fabids</taxon>
        <taxon>Oxalidales</taxon>
        <taxon>Cephalotaceae</taxon>
        <taxon>Cephalotus</taxon>
    </lineage>
</organism>
<sequence>AGFKAGVKDYKLTYYTPDYKTKDTDILAAFRMTPQPGVPPEEAGRAVAAESSTGTWTTVWTDGLTSLDRYKGRCYHIEPVAGEENQYIAYVAYPLDLFEEGSVTNMFTSIVGNVFGFKALRALRLEDLRIPPAYVKTFQGPPHGIQVERDKLNKYGRPLLGCTIKPKLGLSAKNYGRAVYECLRGGLDFTKDDENVNSQPFMRWRDRFLFCAEAIYKAQAETGEIKGHYLNATAGTCEEMNKRAVFARELGVPIVMHDYLTGGFTANTSLAHYCRDNGLLLHIHRAMHAVIDRQKNHGIHFRVLAKALRMSGGDHIHSGTVVGKLEGEREITLGFVDLLRDDFIEKDRTRGIYFTQDWVSLPGVLPVASGGIHVWHMPALTEIFGDDSVLQFGGGTLXXPWGNAPGAVANRVALEACVQARNEGRDLAREGNEIIREASKWSPELAAACEVWKEIKFEF</sequence>
<reference key="1">
    <citation type="journal article" date="1990" name="Proc. Natl. Acad. Sci. U.S.A.">
        <title>rbcL sequence divergence and phylogenetic relationships in Saxifragaceae sensu lato.</title>
        <authorList>
            <person name="Soltis D.E."/>
            <person name="Soltis P.S."/>
            <person name="Clegg M.T."/>
            <person name="Durbin M."/>
        </authorList>
    </citation>
    <scope>NUCLEOTIDE SEQUENCE [GENOMIC DNA]</scope>
</reference>
<reference key="2">
    <citation type="journal article" date="1992" name="Science">
        <title>Carnivorous plants: phylogeny and structural evolution.</title>
        <authorList>
            <person name="Albert V.A."/>
            <person name="Williams S.E."/>
            <person name="Chase M.W."/>
        </authorList>
    </citation>
    <scope>NUCLEOTIDE SEQUENCE [GENOMIC DNA]</scope>
</reference>
<comment type="function">
    <text evidence="1">RuBisCO catalyzes two reactions: the carboxylation of D-ribulose 1,5-bisphosphate, the primary event in carbon dioxide fixation, as well as the oxidative fragmentation of the pentose substrate in the photorespiration process. Both reactions occur simultaneously and in competition at the same active site.</text>
</comment>
<comment type="catalytic activity">
    <reaction evidence="1">
        <text>2 (2R)-3-phosphoglycerate + 2 H(+) = D-ribulose 1,5-bisphosphate + CO2 + H2O</text>
        <dbReference type="Rhea" id="RHEA:23124"/>
        <dbReference type="ChEBI" id="CHEBI:15377"/>
        <dbReference type="ChEBI" id="CHEBI:15378"/>
        <dbReference type="ChEBI" id="CHEBI:16526"/>
        <dbReference type="ChEBI" id="CHEBI:57870"/>
        <dbReference type="ChEBI" id="CHEBI:58272"/>
        <dbReference type="EC" id="4.1.1.39"/>
    </reaction>
</comment>
<comment type="catalytic activity">
    <reaction evidence="1">
        <text>D-ribulose 1,5-bisphosphate + O2 = 2-phosphoglycolate + (2R)-3-phosphoglycerate + 2 H(+)</text>
        <dbReference type="Rhea" id="RHEA:36631"/>
        <dbReference type="ChEBI" id="CHEBI:15378"/>
        <dbReference type="ChEBI" id="CHEBI:15379"/>
        <dbReference type="ChEBI" id="CHEBI:57870"/>
        <dbReference type="ChEBI" id="CHEBI:58033"/>
        <dbReference type="ChEBI" id="CHEBI:58272"/>
    </reaction>
</comment>
<comment type="cofactor">
    <cofactor evidence="1">
        <name>Mg(2+)</name>
        <dbReference type="ChEBI" id="CHEBI:18420"/>
    </cofactor>
    <text evidence="1">Binds 1 Mg(2+) ion per subunit.</text>
</comment>
<comment type="subunit">
    <text evidence="1">Heterohexadecamer of 8 large chains and 8 small chains; disulfide-linked. The disulfide link is formed within the large subunit homodimers.</text>
</comment>
<comment type="subcellular location">
    <subcellularLocation>
        <location>Plastid</location>
        <location>Chloroplast</location>
    </subcellularLocation>
</comment>
<comment type="PTM">
    <text evidence="1">The disulfide bond which can form in the large chain dimeric partners within the hexadecamer appears to be associated with oxidative stress and protein turnover.</text>
</comment>
<comment type="miscellaneous">
    <text evidence="1">The basic functional RuBisCO is composed of a large chain homodimer in a 'head-to-tail' conformation. In form I RuBisCO this homodimer is arranged in a barrel-like tetramer with the small subunits forming a tetrameric 'cap' on each end of the 'barrel'.</text>
</comment>
<comment type="similarity">
    <text evidence="1">Belongs to the RuBisCO large chain family. Type I subfamily.</text>
</comment>
<keyword id="KW-0113">Calvin cycle</keyword>
<keyword id="KW-0120">Carbon dioxide fixation</keyword>
<keyword id="KW-0150">Chloroplast</keyword>
<keyword id="KW-1015">Disulfide bond</keyword>
<keyword id="KW-0456">Lyase</keyword>
<keyword id="KW-0460">Magnesium</keyword>
<keyword id="KW-0479">Metal-binding</keyword>
<keyword id="KW-0488">Methylation</keyword>
<keyword id="KW-0503">Monooxygenase</keyword>
<keyword id="KW-0560">Oxidoreductase</keyword>
<keyword id="KW-0601">Photorespiration</keyword>
<keyword id="KW-0602">Photosynthesis</keyword>
<keyword id="KW-0934">Plastid</keyword>
<geneLocation type="chloroplast"/>
<gene>
    <name evidence="1" type="primary">rbcL</name>
</gene>
<accession>P28390</accession>
<feature type="chain" id="PRO_0000062402" description="Ribulose bisphosphate carboxylase large chain">
    <location>
        <begin position="1" status="less than"/>
        <end position="459" status="greater than"/>
    </location>
</feature>
<feature type="active site" description="Proton acceptor" evidence="1">
    <location>
        <position position="165"/>
    </location>
</feature>
<feature type="active site" description="Proton acceptor" evidence="1">
    <location>
        <position position="284"/>
    </location>
</feature>
<feature type="binding site" description="in homodimeric partner" evidence="1">
    <location>
        <position position="113"/>
    </location>
    <ligand>
        <name>substrate</name>
    </ligand>
</feature>
<feature type="binding site" evidence="1">
    <location>
        <position position="163"/>
    </location>
    <ligand>
        <name>substrate</name>
    </ligand>
</feature>
<feature type="binding site" evidence="1">
    <location>
        <position position="167"/>
    </location>
    <ligand>
        <name>substrate</name>
    </ligand>
</feature>
<feature type="binding site" description="via carbamate group" evidence="1">
    <location>
        <position position="191"/>
    </location>
    <ligand>
        <name>Mg(2+)</name>
        <dbReference type="ChEBI" id="CHEBI:18420"/>
    </ligand>
</feature>
<feature type="binding site" evidence="1">
    <location>
        <position position="193"/>
    </location>
    <ligand>
        <name>Mg(2+)</name>
        <dbReference type="ChEBI" id="CHEBI:18420"/>
    </ligand>
</feature>
<feature type="binding site" evidence="1">
    <location>
        <position position="194"/>
    </location>
    <ligand>
        <name>Mg(2+)</name>
        <dbReference type="ChEBI" id="CHEBI:18420"/>
    </ligand>
</feature>
<feature type="binding site" evidence="1">
    <location>
        <position position="285"/>
    </location>
    <ligand>
        <name>substrate</name>
    </ligand>
</feature>
<feature type="binding site" evidence="1">
    <location>
        <position position="317"/>
    </location>
    <ligand>
        <name>substrate</name>
    </ligand>
</feature>
<feature type="binding site" evidence="1">
    <location>
        <position position="369"/>
    </location>
    <ligand>
        <name>substrate</name>
    </ligand>
</feature>
<feature type="site" description="Transition state stabilizer" evidence="1">
    <location>
        <position position="324"/>
    </location>
</feature>
<feature type="modified residue" description="N6,N6,N6-trimethyllysine" evidence="1">
    <location>
        <position position="4"/>
    </location>
</feature>
<feature type="modified residue" description="N6-carboxylysine" evidence="1">
    <location>
        <position position="191"/>
    </location>
</feature>
<feature type="disulfide bond" description="Interchain; in linked form" evidence="1">
    <location>
        <position position="237"/>
    </location>
</feature>
<feature type="non-terminal residue">
    <location>
        <position position="1"/>
    </location>
</feature>
<feature type="non-terminal residue">
    <location>
        <position position="459"/>
    </location>
</feature>